<dbReference type="EMBL" id="LT708304">
    <property type="protein sequence ID" value="SIU00936.1"/>
    <property type="molecule type" value="Genomic_DNA"/>
</dbReference>
<dbReference type="RefSeq" id="NP_855973.1">
    <property type="nucleotide sequence ID" value="NC_002945.3"/>
</dbReference>
<dbReference type="RefSeq" id="WP_003411866.1">
    <property type="nucleotide sequence ID" value="NC_002945.4"/>
</dbReference>
<dbReference type="BMRB" id="P64984"/>
<dbReference type="SMR" id="P64984"/>
<dbReference type="KEGG" id="mbo:BQ2027_MB2324"/>
<dbReference type="PATRIC" id="fig|233413.5.peg.2548"/>
<dbReference type="Proteomes" id="UP000001419">
    <property type="component" value="Chromosome"/>
</dbReference>
<dbReference type="Gene3D" id="2.30.30.440">
    <property type="entry name" value="Domain of unknown function DUF1918"/>
    <property type="match status" value="1"/>
</dbReference>
<dbReference type="InterPro" id="IPR015035">
    <property type="entry name" value="DUF1918"/>
</dbReference>
<dbReference type="Pfam" id="PF08940">
    <property type="entry name" value="DUF1918"/>
    <property type="match status" value="1"/>
</dbReference>
<dbReference type="SUPFAM" id="SSF50118">
    <property type="entry name" value="Cell growth inhibitor/plasmid maintenance toxic component"/>
    <property type="match status" value="1"/>
</dbReference>
<accession>P64984</accession>
<accession>A0A1R3Y0Z7</accession>
<accession>Q50663</accession>
<accession>X2BJY1</accession>
<keyword id="KW-1185">Reference proteome</keyword>
<evidence type="ECO:0000305" key="1"/>
<proteinExistence type="predicted"/>
<gene>
    <name type="ordered locus">BQ2027_MB2324</name>
</gene>
<protein>
    <recommendedName>
        <fullName>Uncharacterized protein Mb2324</fullName>
    </recommendedName>
</protein>
<organism>
    <name type="scientific">Mycobacterium bovis (strain ATCC BAA-935 / AF2122/97)</name>
    <dbReference type="NCBI Taxonomy" id="233413"/>
    <lineage>
        <taxon>Bacteria</taxon>
        <taxon>Bacillati</taxon>
        <taxon>Actinomycetota</taxon>
        <taxon>Actinomycetes</taxon>
        <taxon>Mycobacteriales</taxon>
        <taxon>Mycobacteriaceae</taxon>
        <taxon>Mycobacterium</taxon>
        <taxon>Mycobacterium tuberculosis complex</taxon>
    </lineage>
</organism>
<reference key="1">
    <citation type="journal article" date="2003" name="Proc. Natl. Acad. Sci. U.S.A.">
        <title>The complete genome sequence of Mycobacterium bovis.</title>
        <authorList>
            <person name="Garnier T."/>
            <person name="Eiglmeier K."/>
            <person name="Camus J.-C."/>
            <person name="Medina N."/>
            <person name="Mansoor H."/>
            <person name="Pryor M."/>
            <person name="Duthoy S."/>
            <person name="Grondin S."/>
            <person name="Lacroix C."/>
            <person name="Monsempe C."/>
            <person name="Simon S."/>
            <person name="Harris B."/>
            <person name="Atkin R."/>
            <person name="Doggett J."/>
            <person name="Mayes R."/>
            <person name="Keating L."/>
            <person name="Wheeler P.R."/>
            <person name="Parkhill J."/>
            <person name="Barrell B.G."/>
            <person name="Cole S.T."/>
            <person name="Gordon S.V."/>
            <person name="Hewinson R.G."/>
        </authorList>
    </citation>
    <scope>NUCLEOTIDE SEQUENCE [LARGE SCALE GENOMIC DNA]</scope>
    <source>
        <strain>ATCC BAA-935 / AF2122/97</strain>
    </source>
</reference>
<reference key="2">
    <citation type="journal article" date="2017" name="Genome Announc.">
        <title>Updated reference genome sequence and annotation of Mycobacterium bovis AF2122/97.</title>
        <authorList>
            <person name="Malone K.M."/>
            <person name="Farrell D."/>
            <person name="Stuber T.P."/>
            <person name="Schubert O.T."/>
            <person name="Aebersold R."/>
            <person name="Robbe-Austerman S."/>
            <person name="Gordon S.V."/>
        </authorList>
    </citation>
    <scope>NUCLEOTIDE SEQUENCE [LARGE SCALE GENOMIC DNA]</scope>
    <scope>GENOME REANNOTATION</scope>
    <source>
        <strain>ATCC BAA-935 / AF2122/97</strain>
    </source>
</reference>
<sequence>MHAKVGDYLVVKGTTTERHDQHAEIIEVRSADGSPPYVVRWLVNGHETTVYPGSDAVVVTATEHAEAEKRAAARAGHAAT</sequence>
<feature type="chain" id="PRO_0000104012" description="Uncharacterized protein Mb2324">
    <location>
        <begin position="1"/>
        <end position="80"/>
    </location>
</feature>
<name>Y2324_MYCBO</name>
<comment type="similarity">
    <text evidence="1">To M.leprae U650M.</text>
</comment>